<keyword id="KW-0326">Glycosidase</keyword>
<keyword id="KW-0378">Hydrolase</keyword>
<protein>
    <recommendedName>
        <fullName evidence="1">6-phospho-beta-galactosidase</fullName>
        <ecNumber evidence="1">3.2.1.85</ecNumber>
    </recommendedName>
    <alternativeName>
        <fullName evidence="1">Beta-D-phosphogalactoside galactohydrolase</fullName>
        <shortName evidence="1">PGALase</shortName>
    </alternativeName>
    <alternativeName>
        <fullName evidence="1">P-beta-Gal</fullName>
        <shortName evidence="1">PBG</shortName>
    </alternativeName>
</protein>
<sequence>MRKQLPKDFVIGGATAAYQVEGATKEDGKGRVLWDDFLEKQGRFSPDPAADFYHRYDEDLALAEAYGHQVIRLSIAWSRIFPDGAGAVEPRGVAFYHRLFAACAKHHLIPFVTLHHFDTPERLHAIGDWLSQEMLEDFVEYARFCFEEFPEIKHWITINEPTSMAVQQYTSGTFPPAETGHFDKTFQAEHNQIVAHARIVNLYKSMGLDGEIGIVHALQTPYPYSDSSEDQHAADLQDALENRLYLDGTLAGDYAPKTLALIKEILAANQQPMFKYTDEEMAAIKKAAHQLDFVGVNNYFSKWLRAYHGKSETIHNGDGSKGSSVARLHGIGEEKKPAGIETTDWDWSIYPRGMYDMLMRIHQDYPLVPAIYVTENGIGLKESLPAEVTPNTVIADPKRIDYLKKYLSAVADAIQAGANVKGYFVWSLQDQFSWTNGYSKRYGLFFVDFPTQKRYVKQSAEWLKQVSQTHVIPE</sequence>
<evidence type="ECO:0000255" key="1">
    <source>
        <dbReference type="HAMAP-Rule" id="MF_01574"/>
    </source>
</evidence>
<comment type="catalytic activity">
    <reaction evidence="1">
        <text>a 6-phospho-beta-D-galactoside + H2O = D-galactose 6-phosphate + an alcohol</text>
        <dbReference type="Rhea" id="RHEA:24568"/>
        <dbReference type="ChEBI" id="CHEBI:15377"/>
        <dbReference type="ChEBI" id="CHEBI:30879"/>
        <dbReference type="ChEBI" id="CHEBI:58534"/>
        <dbReference type="ChEBI" id="CHEBI:91004"/>
        <dbReference type="EC" id="3.2.1.85"/>
    </reaction>
</comment>
<comment type="pathway">
    <text evidence="1">Carbohydrate metabolism; lactose degradation; D-galactose 6-phosphate and beta-D-glucose from lactose 6-phosphate: step 1/1.</text>
</comment>
<comment type="similarity">
    <text evidence="1">Belongs to the glycosyl hydrolase 1 family.</text>
</comment>
<feature type="chain" id="PRO_0000260723" description="6-phospho-beta-galactosidase">
    <location>
        <begin position="1"/>
        <end position="474"/>
    </location>
</feature>
<feature type="active site" description="Proton donor" evidence="1">
    <location>
        <position position="160"/>
    </location>
</feature>
<feature type="active site" description="Nucleophile" evidence="1">
    <location>
        <position position="375"/>
    </location>
</feature>
<feature type="binding site" evidence="1">
    <location>
        <position position="19"/>
    </location>
    <ligand>
        <name>D-galactose 6-phosphate</name>
        <dbReference type="ChEBI" id="CHEBI:91004"/>
    </ligand>
</feature>
<feature type="binding site" evidence="1">
    <location>
        <position position="116"/>
    </location>
    <ligand>
        <name>D-galactose 6-phosphate</name>
        <dbReference type="ChEBI" id="CHEBI:91004"/>
    </ligand>
</feature>
<feature type="binding site" evidence="1">
    <location>
        <position position="159"/>
    </location>
    <ligand>
        <name>D-galactose 6-phosphate</name>
        <dbReference type="ChEBI" id="CHEBI:91004"/>
    </ligand>
</feature>
<feature type="binding site" evidence="1">
    <location>
        <position position="160"/>
    </location>
    <ligand>
        <name>D-galactose 6-phosphate</name>
        <dbReference type="ChEBI" id="CHEBI:91004"/>
    </ligand>
</feature>
<feature type="binding site" evidence="1">
    <location>
        <position position="297"/>
    </location>
    <ligand>
        <name>D-galactose 6-phosphate</name>
        <dbReference type="ChEBI" id="CHEBI:91004"/>
    </ligand>
</feature>
<feature type="binding site" evidence="1">
    <location>
        <position position="433"/>
    </location>
    <ligand>
        <name>D-galactose 6-phosphate</name>
        <dbReference type="ChEBI" id="CHEBI:91004"/>
    </ligand>
</feature>
<feature type="binding site" evidence="1">
    <location>
        <position position="434"/>
    </location>
    <ligand>
        <name>D-galactose 6-phosphate</name>
        <dbReference type="ChEBI" id="CHEBI:91004"/>
    </ligand>
</feature>
<feature type="binding site" evidence="1">
    <location>
        <position position="440"/>
    </location>
    <ligand>
        <name>D-galactose 6-phosphate</name>
        <dbReference type="ChEBI" id="CHEBI:91004"/>
    </ligand>
</feature>
<feature type="binding site" evidence="1">
    <location>
        <position position="442"/>
    </location>
    <ligand>
        <name>D-galactose 6-phosphate</name>
        <dbReference type="ChEBI" id="CHEBI:91004"/>
    </ligand>
</feature>
<name>LACG_LACRH</name>
<dbReference type="EC" id="3.2.1.85" evidence="1"/>
<dbReference type="EMBL" id="AY705915">
    <property type="protein sequence ID" value="AAW30155.1"/>
    <property type="molecule type" value="Genomic_DNA"/>
</dbReference>
<dbReference type="RefSeq" id="WP_005691814.1">
    <property type="nucleotide sequence ID" value="NZ_WPCQ01000010.1"/>
</dbReference>
<dbReference type="SMR" id="Q29ZJ1"/>
<dbReference type="STRING" id="47715.AWJ15_13340"/>
<dbReference type="eggNOG" id="COG2723">
    <property type="taxonomic scope" value="Bacteria"/>
</dbReference>
<dbReference type="UniPathway" id="UPA00542">
    <property type="reaction ID" value="UER00605"/>
</dbReference>
<dbReference type="GO" id="GO:0005829">
    <property type="term" value="C:cytosol"/>
    <property type="evidence" value="ECO:0007669"/>
    <property type="project" value="TreeGrafter"/>
</dbReference>
<dbReference type="GO" id="GO:0033920">
    <property type="term" value="F:6-phospho-beta-galactosidase activity"/>
    <property type="evidence" value="ECO:0007669"/>
    <property type="project" value="UniProtKB-UniRule"/>
</dbReference>
<dbReference type="GO" id="GO:0008422">
    <property type="term" value="F:beta-glucosidase activity"/>
    <property type="evidence" value="ECO:0007669"/>
    <property type="project" value="TreeGrafter"/>
</dbReference>
<dbReference type="GO" id="GO:0019512">
    <property type="term" value="P:lactose catabolic process via tagatose-6-phosphate"/>
    <property type="evidence" value="ECO:0007669"/>
    <property type="project" value="InterPro"/>
</dbReference>
<dbReference type="FunFam" id="3.20.20.80:FF:000004">
    <property type="entry name" value="Beta-glucosidase 6-phospho-beta-glucosidase"/>
    <property type="match status" value="1"/>
</dbReference>
<dbReference type="Gene3D" id="3.20.20.80">
    <property type="entry name" value="Glycosidases"/>
    <property type="match status" value="1"/>
</dbReference>
<dbReference type="HAMAP" id="MF_01574">
    <property type="entry name" value="LacG"/>
    <property type="match status" value="1"/>
</dbReference>
<dbReference type="InterPro" id="IPR005928">
    <property type="entry name" value="6P-beta-galactosidase"/>
</dbReference>
<dbReference type="InterPro" id="IPR001360">
    <property type="entry name" value="Glyco_hydro_1"/>
</dbReference>
<dbReference type="InterPro" id="IPR018120">
    <property type="entry name" value="Glyco_hydro_1_AS"/>
</dbReference>
<dbReference type="InterPro" id="IPR017853">
    <property type="entry name" value="Glycoside_hydrolase_SF"/>
</dbReference>
<dbReference type="NCBIfam" id="TIGR01233">
    <property type="entry name" value="lacG"/>
    <property type="match status" value="1"/>
</dbReference>
<dbReference type="NCBIfam" id="NF010036">
    <property type="entry name" value="PRK13511.1"/>
    <property type="match status" value="1"/>
</dbReference>
<dbReference type="PANTHER" id="PTHR10353">
    <property type="entry name" value="GLYCOSYL HYDROLASE"/>
    <property type="match status" value="1"/>
</dbReference>
<dbReference type="PANTHER" id="PTHR10353:SF36">
    <property type="entry name" value="LP05116P"/>
    <property type="match status" value="1"/>
</dbReference>
<dbReference type="Pfam" id="PF00232">
    <property type="entry name" value="Glyco_hydro_1"/>
    <property type="match status" value="1"/>
</dbReference>
<dbReference type="PRINTS" id="PR00131">
    <property type="entry name" value="GLHYDRLASE1"/>
</dbReference>
<dbReference type="SUPFAM" id="SSF51445">
    <property type="entry name" value="(Trans)glycosidases"/>
    <property type="match status" value="1"/>
</dbReference>
<dbReference type="PROSITE" id="PS00572">
    <property type="entry name" value="GLYCOSYL_HYDROL_F1_1"/>
    <property type="match status" value="1"/>
</dbReference>
<gene>
    <name evidence="1" type="primary">lacG</name>
</gene>
<proteinExistence type="inferred from homology"/>
<reference key="1">
    <citation type="journal article" date="2006" name="J. Appl. Microbiol.">
        <title>Sequence, organization, transcription and regulation of lactose and galactose operons in Lactobacillus rhamnosus TCELL-1.</title>
        <authorList>
            <person name="Tsai Y.-K."/>
            <person name="Lin T.-H."/>
        </authorList>
    </citation>
    <scope>NUCLEOTIDE SEQUENCE [GENOMIC DNA]</scope>
    <source>
        <strain>TCELL-1</strain>
    </source>
</reference>
<accession>Q29ZJ1</accession>
<organism>
    <name type="scientific">Lacticaseibacillus rhamnosus</name>
    <name type="common">Lactobacillus rhamnosus</name>
    <dbReference type="NCBI Taxonomy" id="47715"/>
    <lineage>
        <taxon>Bacteria</taxon>
        <taxon>Bacillati</taxon>
        <taxon>Bacillota</taxon>
        <taxon>Bacilli</taxon>
        <taxon>Lactobacillales</taxon>
        <taxon>Lactobacillaceae</taxon>
        <taxon>Lacticaseibacillus</taxon>
    </lineage>
</organism>